<reference key="1">
    <citation type="patent" date="1999-03-02" number="US5877026">
        <title>Analgesic peptides from venom of Grammostola spatulata and use thereof.</title>
        <authorList>
            <person name="Lampe R.A."/>
        </authorList>
    </citation>
    <scope>PROTEIN SEQUENCE</scope>
    <scope>FUNCTION</scope>
    <scope>SUBCELLULAR LOCATION</scope>
    <scope>MASS SPECTROMETRY</scope>
    <scope>AMIDATION AT LEU-29</scope>
    <source>
        <tissue>Venom</tissue>
    </source>
</reference>
<reference key="2">
    <citation type="journal article" date="2010" name="J. Biol. Chem.">
        <title>Target promiscuity and heterogeneous effects of tarantula venom peptides affecting Na+ and K+ ion channels.</title>
        <authorList>
            <person name="Redaelli E."/>
            <person name="Cassulini R.R."/>
            <person name="Silva D.F."/>
            <person name="Clement H."/>
            <person name="Schiavon E."/>
            <person name="Zamudio F.Z."/>
            <person name="Odell G."/>
            <person name="Arcangeli A."/>
            <person name="Clare J.J."/>
            <person name="Alagon A."/>
            <person name="de la Vega R.C."/>
            <person name="Possani L.D."/>
            <person name="Wanke E."/>
        </authorList>
    </citation>
    <scope>PROTEIN SEQUENCE</scope>
    <scope>MASS SPECTROMETRY</scope>
    <scope>FUNCTION</scope>
    <scope>SUBCELLULAR LOCATION</scope>
</reference>
<reference key="3">
    <citation type="journal article" date="2010" name="J. Biol. Chem.">
        <authorList>
            <person name="Redaelli E."/>
            <person name="Cassulini R.R."/>
            <person name="Silva D.F."/>
            <person name="Clement H."/>
            <person name="Schiavon E."/>
            <person name="Zamudio F.Z."/>
            <person name="Odell G."/>
            <person name="Arcangeli A."/>
            <person name="Clare J.J."/>
            <person name="Alagon A."/>
            <person name="de la Vega R.C."/>
            <person name="Possani L.D."/>
            <person name="Wanke E."/>
        </authorList>
    </citation>
    <scope>ERRATUM OF PUBMED:19955179</scope>
</reference>
<reference key="4">
    <citation type="journal article" date="2019" name="Cell">
        <title>Structural basis of Nav1.7 inhibition by a gating-modifier spider toxin.</title>
        <authorList>
            <person name="Xu H."/>
            <person name="Li T."/>
            <person name="Rohou A."/>
            <person name="Arthur C.P."/>
            <person name="Tzakoniati F."/>
            <person name="Wong E."/>
            <person name="Estevez A."/>
            <person name="Kugel C."/>
            <person name="Franke Y."/>
            <person name="Chen J."/>
            <person name="Ciferri C."/>
            <person name="Hackos D.H."/>
            <person name="Koth C.M."/>
            <person name="Payandeh J."/>
        </authorList>
    </citation>
    <scope>FUNCTION</scope>
</reference>
<reference key="5">
    <citation type="journal article" date="2019" name="Toxins">
        <title>Chemical synthesis, proper folding, Nav channel selectivity profile and analgesic properties of the spider peptide Phlotoxin 1.</title>
        <authorList>
            <person name="Nicolas S."/>
            <person name="Zoukimian C."/>
            <person name="Bosmans F."/>
            <person name="Montnach J."/>
            <person name="Diochot S."/>
            <person name="Cuypers E."/>
            <person name="De Waard S."/>
            <person name="Beroud R."/>
            <person name="Mebs D."/>
            <person name="Craik D."/>
            <person name="Boturyn D."/>
            <person name="Lazdunski M."/>
            <person name="Tytgat J."/>
            <person name="De Waard M."/>
        </authorList>
    </citation>
    <scope>FUNCTION ON NAV1.7/SCN9A</scope>
    <scope>SYNTHESIS</scope>
</reference>
<proteinExistence type="evidence at protein level"/>
<keyword id="KW-0027">Amidation</keyword>
<keyword id="KW-0903">Direct protein sequencing</keyword>
<keyword id="KW-1015">Disulfide bond</keyword>
<keyword id="KW-0872">Ion channel impairing toxin</keyword>
<keyword id="KW-0960">Knottin</keyword>
<keyword id="KW-0528">Neurotoxin</keyword>
<keyword id="KW-0632">Potassium channel impairing toxin</keyword>
<keyword id="KW-0964">Secreted</keyword>
<keyword id="KW-0800">Toxin</keyword>
<keyword id="KW-1220">Voltage-gated potassium channel impairing toxin</keyword>
<keyword id="KW-0738">Voltage-gated sodium channel impairing toxin</keyword>
<name>AF1_GRARO</name>
<feature type="peptide" id="PRO_0000044551" description="Beta-theraphotoxin-Gr1b" evidence="2 5">
    <location>
        <begin position="1"/>
        <end position="29"/>
    </location>
</feature>
<feature type="modified residue" description="Leucine amide" evidence="5">
    <location>
        <position position="29"/>
    </location>
</feature>
<feature type="disulfide bond" evidence="1">
    <location>
        <begin position="2"/>
        <end position="16"/>
    </location>
</feature>
<feature type="disulfide bond" evidence="1">
    <location>
        <begin position="9"/>
        <end position="21"/>
    </location>
</feature>
<feature type="disulfide bond" evidence="1">
    <location>
        <begin position="15"/>
        <end position="25"/>
    </location>
</feature>
<organism>
    <name type="scientific">Grammostola rosea</name>
    <name type="common">Chilean rose tarantula</name>
    <name type="synonym">Grammostola spatulata</name>
    <dbReference type="NCBI Taxonomy" id="432528"/>
    <lineage>
        <taxon>Eukaryota</taxon>
        <taxon>Metazoa</taxon>
        <taxon>Ecdysozoa</taxon>
        <taxon>Arthropoda</taxon>
        <taxon>Chelicerata</taxon>
        <taxon>Arachnida</taxon>
        <taxon>Araneae</taxon>
        <taxon>Mygalomorphae</taxon>
        <taxon>Theraphosidae</taxon>
        <taxon>Grammostola</taxon>
    </lineage>
</organism>
<sequence length="29" mass="3714">YCQKWLWTCDSERKCCEDMVCRLWCKKRL</sequence>
<dbReference type="SMR" id="P61408"/>
<dbReference type="ArachnoServer" id="AS000026">
    <property type="toxin name" value="beta-theraphotoxin-Gr1b"/>
</dbReference>
<dbReference type="GO" id="GO:0005576">
    <property type="term" value="C:extracellular region"/>
    <property type="evidence" value="ECO:0007669"/>
    <property type="project" value="UniProtKB-SubCell"/>
</dbReference>
<dbReference type="GO" id="GO:0015459">
    <property type="term" value="F:potassium channel regulator activity"/>
    <property type="evidence" value="ECO:0007669"/>
    <property type="project" value="UniProtKB-KW"/>
</dbReference>
<dbReference type="GO" id="GO:0017080">
    <property type="term" value="F:sodium channel regulator activity"/>
    <property type="evidence" value="ECO:0007669"/>
    <property type="project" value="UniProtKB-KW"/>
</dbReference>
<dbReference type="GO" id="GO:0090729">
    <property type="term" value="F:toxin activity"/>
    <property type="evidence" value="ECO:0007669"/>
    <property type="project" value="UniProtKB-KW"/>
</dbReference>
<dbReference type="SUPFAM" id="SSF57059">
    <property type="entry name" value="omega toxin-like"/>
    <property type="match status" value="1"/>
</dbReference>
<comment type="function">
    <text evidence="2 3 4 5">Inhibits the voltage-gated sodium channels Nav1.1/SCN1A (IC(50)=360 nM), Nav1.2/SCN2A (IC(50)=600 nM), Nav1.3/SCN3A (IC(50)=1280), Nav1.4/SCN4A (IC(50)=330 nM), Nav1.6/SCN8A (IC(50)=1200 nM), Nav1.7/SCN9A (IC(50)=1-40 nM), and voltage-gated potassium channels Kv11.1/KCNH2 (IC(50)=4.8 uM) (PubMed:19955179, PubMed:30661758, PubMed:31234412). Induces analgesia in mammals (Ref.1). This analgesia is mediated by a non-opioid receptor related mechanism (Ref.1).</text>
</comment>
<comment type="subcellular location">
    <subcellularLocation>
        <location evidence="2 5">Secreted</location>
    </subcellularLocation>
</comment>
<comment type="tissue specificity">
    <text evidence="11">Expressed by the venom gland.</text>
</comment>
<comment type="domain">
    <text evidence="1">The presence of a 'disulfide through disulfide knot' structurally defines this protein as a knottin.</text>
</comment>
<comment type="mass spectrometry" mass="3713.5" method="Electrospray" evidence="5"/>
<comment type="mass spectrometry" mass="3707.0" method="Unknown" evidence="2"/>
<comment type="miscellaneous">
    <text evidence="2">Negative results: does not inhibit sodium channels Nav1.5/SCN5A, and potassium channels Kv1.1/KCNA1, Kv1.4/KCNA4, Kv11.2/KCNH6, Kv11.3/KCNH7 (IC(50)&gt;200 uM).</text>
</comment>
<comment type="similarity">
    <text evidence="10">Belongs to the neurotoxin 30 (phrixotoxin) family.</text>
</comment>
<evidence type="ECO:0000250" key="1">
    <source>
        <dbReference type="UniProtKB" id="P61230"/>
    </source>
</evidence>
<evidence type="ECO:0000269" key="2">
    <source>
    </source>
</evidence>
<evidence type="ECO:0000269" key="3">
    <source>
    </source>
</evidence>
<evidence type="ECO:0000269" key="4">
    <source>
    </source>
</evidence>
<evidence type="ECO:0000269" key="5">
    <source ref="1"/>
</evidence>
<evidence type="ECO:0000303" key="6">
    <source>
    </source>
</evidence>
<evidence type="ECO:0000303" key="7">
    <source>
    </source>
</evidence>
<evidence type="ECO:0000303" key="8">
    <source>
    </source>
</evidence>
<evidence type="ECO:0000303" key="9">
    <source ref="1"/>
</evidence>
<evidence type="ECO:0000305" key="10"/>
<evidence type="ECO:0000305" key="11">
    <source ref="1"/>
</evidence>
<accession>P61408</accession>
<protein>
    <recommendedName>
        <fullName evidence="8">Beta-theraphotoxin-Gr1b</fullName>
        <shortName evidence="8">Beta-TRTX-Gr1b</shortName>
    </recommendedName>
    <alternativeName>
        <fullName>GsAF 1</fullName>
        <shortName evidence="7">GsAf1</shortName>
    </alternativeName>
    <alternativeName>
        <fullName evidence="9">GsAF I</fullName>
        <shortName evidence="6">GsAFI</shortName>
    </alternativeName>
</protein>